<organism>
    <name type="scientific">Paramecium tetraurelia</name>
    <dbReference type="NCBI Taxonomy" id="5888"/>
    <lineage>
        <taxon>Eukaryota</taxon>
        <taxon>Sar</taxon>
        <taxon>Alveolata</taxon>
        <taxon>Ciliophora</taxon>
        <taxon>Intramacronucleata</taxon>
        <taxon>Oligohymenophorea</taxon>
        <taxon>Peniculida</taxon>
        <taxon>Parameciidae</taxon>
        <taxon>Paramecium</taxon>
    </lineage>
</organism>
<sequence length="149" mass="16803">MAEQLTEEQIAEFKEAFALFDKDGDGTITTKELGTVMRSLGQNPTEAELQDMINEVDADGNGTIDFPEFLSLMARKMKEQDSEEELIEAFKVFDRDGNGLISAAELRHVMTNLGEKLTDDEVDEMIREADIDGDGHINYEEFVRMMVSK</sequence>
<name>CALM_PARTE</name>
<protein>
    <recommendedName>
        <fullName>Calmodulin</fullName>
        <shortName>CaM</shortName>
    </recommendedName>
</protein>
<proteinExistence type="evidence at protein level"/>
<evidence type="ECO:0000255" key="1">
    <source>
        <dbReference type="PROSITE-ProRule" id="PRU00448"/>
    </source>
</evidence>
<evidence type="ECO:0000269" key="2">
    <source>
    </source>
</evidence>
<evidence type="ECO:0000269" key="3">
    <source>
    </source>
</evidence>
<evidence type="ECO:0000269" key="4">
    <source>
    </source>
</evidence>
<evidence type="ECO:0000269" key="5">
    <source>
    </source>
</evidence>
<evidence type="ECO:0000269" key="6">
    <source>
    </source>
</evidence>
<evidence type="ECO:0000305" key="7"/>
<evidence type="ECO:0007829" key="8">
    <source>
        <dbReference type="PDB" id="1EXR"/>
    </source>
</evidence>
<evidence type="ECO:0007829" key="9">
    <source>
        <dbReference type="PDB" id="2KXW"/>
    </source>
</evidence>
<evidence type="ECO:0007829" key="10">
    <source>
        <dbReference type="PDB" id="5E1K"/>
    </source>
</evidence>
<accession>P07463</accession>
<accession>A0DD49</accession>
<feature type="initiator methionine" description="Removed" evidence="5">
    <location>
        <position position="1"/>
    </location>
</feature>
<feature type="chain" id="PRO_0000198261" description="Calmodulin">
    <location>
        <begin position="2"/>
        <end position="149"/>
    </location>
</feature>
<feature type="domain" description="EF-hand 1" evidence="1">
    <location>
        <begin position="8"/>
        <end position="43"/>
    </location>
</feature>
<feature type="domain" description="EF-hand 2" evidence="1">
    <location>
        <begin position="44"/>
        <end position="79"/>
    </location>
</feature>
<feature type="domain" description="EF-hand 3" evidence="1">
    <location>
        <begin position="81"/>
        <end position="116"/>
    </location>
</feature>
<feature type="domain" description="EF-hand 4" evidence="1">
    <location>
        <begin position="117"/>
        <end position="149"/>
    </location>
</feature>
<feature type="binding site" evidence="1">
    <location>
        <position position="21"/>
    </location>
    <ligand>
        <name>Ca(2+)</name>
        <dbReference type="ChEBI" id="CHEBI:29108"/>
        <label>1</label>
    </ligand>
</feature>
<feature type="binding site" evidence="1">
    <location>
        <position position="23"/>
    </location>
    <ligand>
        <name>Ca(2+)</name>
        <dbReference type="ChEBI" id="CHEBI:29108"/>
        <label>1</label>
    </ligand>
</feature>
<feature type="binding site" evidence="1">
    <location>
        <position position="25"/>
    </location>
    <ligand>
        <name>Ca(2+)</name>
        <dbReference type="ChEBI" id="CHEBI:29108"/>
        <label>1</label>
    </ligand>
</feature>
<feature type="binding site" evidence="1">
    <location>
        <position position="27"/>
    </location>
    <ligand>
        <name>Ca(2+)</name>
        <dbReference type="ChEBI" id="CHEBI:29108"/>
        <label>1</label>
    </ligand>
</feature>
<feature type="binding site" evidence="1">
    <location>
        <position position="32"/>
    </location>
    <ligand>
        <name>Ca(2+)</name>
        <dbReference type="ChEBI" id="CHEBI:29108"/>
        <label>1</label>
    </ligand>
</feature>
<feature type="binding site" evidence="1">
    <location>
        <position position="57"/>
    </location>
    <ligand>
        <name>Ca(2+)</name>
        <dbReference type="ChEBI" id="CHEBI:29108"/>
        <label>2</label>
    </ligand>
</feature>
<feature type="binding site" evidence="1">
    <location>
        <position position="59"/>
    </location>
    <ligand>
        <name>Ca(2+)</name>
        <dbReference type="ChEBI" id="CHEBI:29108"/>
        <label>2</label>
    </ligand>
</feature>
<feature type="binding site" evidence="1">
    <location>
        <position position="61"/>
    </location>
    <ligand>
        <name>Ca(2+)</name>
        <dbReference type="ChEBI" id="CHEBI:29108"/>
        <label>2</label>
    </ligand>
</feature>
<feature type="binding site" evidence="1">
    <location>
        <position position="63"/>
    </location>
    <ligand>
        <name>Ca(2+)</name>
        <dbReference type="ChEBI" id="CHEBI:29108"/>
        <label>2</label>
    </ligand>
</feature>
<feature type="binding site" evidence="1">
    <location>
        <position position="68"/>
    </location>
    <ligand>
        <name>Ca(2+)</name>
        <dbReference type="ChEBI" id="CHEBI:29108"/>
        <label>2</label>
    </ligand>
</feature>
<feature type="binding site" evidence="1">
    <location>
        <position position="94"/>
    </location>
    <ligand>
        <name>Ca(2+)</name>
        <dbReference type="ChEBI" id="CHEBI:29108"/>
        <label>3</label>
    </ligand>
</feature>
<feature type="binding site" evidence="1">
    <location>
        <position position="96"/>
    </location>
    <ligand>
        <name>Ca(2+)</name>
        <dbReference type="ChEBI" id="CHEBI:29108"/>
        <label>3</label>
    </ligand>
</feature>
<feature type="binding site" evidence="1">
    <location>
        <position position="98"/>
    </location>
    <ligand>
        <name>Ca(2+)</name>
        <dbReference type="ChEBI" id="CHEBI:29108"/>
        <label>3</label>
    </ligand>
</feature>
<feature type="binding site" evidence="1">
    <location>
        <position position="105"/>
    </location>
    <ligand>
        <name>Ca(2+)</name>
        <dbReference type="ChEBI" id="CHEBI:29108"/>
        <label>3</label>
    </ligand>
</feature>
<feature type="binding site" evidence="1">
    <location>
        <position position="130"/>
    </location>
    <ligand>
        <name>Ca(2+)</name>
        <dbReference type="ChEBI" id="CHEBI:29108"/>
        <label>4</label>
    </ligand>
</feature>
<feature type="binding site" evidence="1">
    <location>
        <position position="132"/>
    </location>
    <ligand>
        <name>Ca(2+)</name>
        <dbReference type="ChEBI" id="CHEBI:29108"/>
        <label>4</label>
    </ligand>
</feature>
<feature type="binding site" evidence="1">
    <location>
        <position position="134"/>
    </location>
    <ligand>
        <name>Ca(2+)</name>
        <dbReference type="ChEBI" id="CHEBI:29108"/>
        <label>4</label>
    </ligand>
</feature>
<feature type="binding site" evidence="1">
    <location>
        <position position="136"/>
    </location>
    <ligand>
        <name>Ca(2+)</name>
        <dbReference type="ChEBI" id="CHEBI:29108"/>
        <label>4</label>
    </ligand>
</feature>
<feature type="binding site" evidence="1">
    <location>
        <position position="141"/>
    </location>
    <ligand>
        <name>Ca(2+)</name>
        <dbReference type="ChEBI" id="CHEBI:29108"/>
        <label>4</label>
    </ligand>
</feature>
<feature type="modified residue" description="N-acetylalanine" evidence="5">
    <location>
        <position position="2"/>
    </location>
</feature>
<feature type="modified residue" description="N6,N6-dimethyllysine" evidence="5">
    <location>
        <position position="14"/>
    </location>
</feature>
<feature type="modified residue" description="N6,N6,N6-trimethyllysine" evidence="5">
    <location>
        <position position="116"/>
    </location>
</feature>
<feature type="mutagenesis site" description="In CAM13." evidence="6">
    <original>V</original>
    <variation>I</variation>
    <location>
        <position position="36"/>
    </location>
</feature>
<feature type="mutagenesis site" description="In CAM12." evidence="6">
    <original>G</original>
    <variation>E</variation>
    <location>
        <position position="41"/>
    </location>
</feature>
<feature type="mutagenesis site" description="In CAM15." evidence="2 6">
    <original>D</original>
    <variation>G</variation>
    <location>
        <position position="51"/>
    </location>
</feature>
<feature type="mutagenesis site" description="In CAM12; lacks the Ca(2+)-dependent K(+) current." evidence="2 6">
    <original>D</original>
    <variation>N</variation>
    <location>
        <position position="51"/>
    </location>
</feature>
<feature type="mutagenesis site" description="In CAM11." evidence="6">
    <original>E</original>
    <variation>K</variation>
    <location>
        <position position="55"/>
    </location>
</feature>
<feature type="mutagenesis site" description="In CAM14." evidence="6">
    <original>G</original>
    <variation>S</variation>
    <location>
        <position position="60"/>
    </location>
</feature>
<feature type="mutagenesis site" description="In CAM5." evidence="6">
    <original>D</original>
    <variation>G</variation>
    <location>
        <position position="96"/>
    </location>
</feature>
<feature type="mutagenesis site" description="In CAM1 (also named PNTA1); lacks the Ca(2+)-dependent K(+) current." evidence="3">
    <original>S</original>
    <variation>F</variation>
    <location>
        <position position="102"/>
    </location>
</feature>
<feature type="mutagenesis site" description="In CAM6." evidence="6">
    <original>A</original>
    <variation>V</variation>
    <location>
        <position position="103"/>
    </location>
</feature>
<feature type="mutagenesis site" description="In CAM4." evidence="6">
    <original>E</original>
    <variation>K</variation>
    <location>
        <position position="105"/>
    </location>
</feature>
<feature type="mutagenesis site" description="In CAM7." evidence="6">
    <original>H</original>
    <variation>R</variation>
    <location>
        <position position="136"/>
    </location>
</feature>
<feature type="mutagenesis site" description="In CAM2 (also named PNTA2)." evidence="4">
    <original>I</original>
    <variation>T</variation>
    <location>
        <position position="137"/>
    </location>
</feature>
<feature type="mutagenesis site" description="In CAM3." evidence="6">
    <original>M</original>
    <variation>V</variation>
    <location>
        <position position="146"/>
    </location>
</feature>
<feature type="helix" evidence="8">
    <location>
        <begin position="7"/>
        <end position="20"/>
    </location>
</feature>
<feature type="strand" evidence="8">
    <location>
        <begin position="25"/>
        <end position="28"/>
    </location>
</feature>
<feature type="helix" evidence="8">
    <location>
        <begin position="30"/>
        <end position="39"/>
    </location>
</feature>
<feature type="helix" evidence="8">
    <location>
        <begin position="46"/>
        <end position="56"/>
    </location>
</feature>
<feature type="strand" evidence="8">
    <location>
        <begin position="61"/>
        <end position="65"/>
    </location>
</feature>
<feature type="helix" evidence="8">
    <location>
        <begin position="66"/>
        <end position="93"/>
    </location>
</feature>
<feature type="strand" evidence="10">
    <location>
        <begin position="98"/>
        <end position="101"/>
    </location>
</feature>
<feature type="helix" evidence="8">
    <location>
        <begin position="103"/>
        <end position="112"/>
    </location>
</feature>
<feature type="turn" evidence="9">
    <location>
        <begin position="114"/>
        <end position="116"/>
    </location>
</feature>
<feature type="helix" evidence="8">
    <location>
        <begin position="119"/>
        <end position="129"/>
    </location>
</feature>
<feature type="strand" evidence="8">
    <location>
        <begin position="131"/>
        <end position="137"/>
    </location>
</feature>
<feature type="helix" evidence="8">
    <location>
        <begin position="139"/>
        <end position="147"/>
    </location>
</feature>
<dbReference type="EMBL" id="M34540">
    <property type="protein sequence ID" value="AAA29443.1"/>
    <property type="molecule type" value="Genomic_DNA"/>
</dbReference>
<dbReference type="EMBL" id="S68025">
    <property type="protein sequence ID" value="AAB20487.1"/>
    <property type="molecule type" value="Genomic_DNA"/>
</dbReference>
<dbReference type="EMBL" id="CT868385">
    <property type="protein sequence ID" value="CAK80966.1"/>
    <property type="molecule type" value="Genomic_DNA"/>
</dbReference>
<dbReference type="PIR" id="A35603">
    <property type="entry name" value="MCPP"/>
</dbReference>
<dbReference type="RefSeq" id="XP_001448363.1">
    <property type="nucleotide sequence ID" value="XM_001448326.1"/>
</dbReference>
<dbReference type="PDB" id="1CLM">
    <property type="method" value="X-ray"/>
    <property type="resolution" value="1.80 A"/>
    <property type="chains" value="A=2-149"/>
</dbReference>
<dbReference type="PDB" id="1EXR">
    <property type="method" value="X-ray"/>
    <property type="resolution" value="1.00 A"/>
    <property type="chains" value="A=2-149"/>
</dbReference>
<dbReference type="PDB" id="1N0Y">
    <property type="method" value="X-ray"/>
    <property type="resolution" value="1.75 A"/>
    <property type="chains" value="A/B=2-149"/>
</dbReference>
<dbReference type="PDB" id="1OSA">
    <property type="method" value="X-ray"/>
    <property type="resolution" value="1.68 A"/>
    <property type="chains" value="A=2-149"/>
</dbReference>
<dbReference type="PDB" id="2KXW">
    <property type="method" value="NMR"/>
    <property type="chains" value="A=77-149"/>
</dbReference>
<dbReference type="PDB" id="2M5E">
    <property type="method" value="NMR"/>
    <property type="chains" value="A=77-149"/>
</dbReference>
<dbReference type="PDB" id="5E1K">
    <property type="method" value="X-ray"/>
    <property type="resolution" value="1.00 A"/>
    <property type="chains" value="A=2-149"/>
</dbReference>
<dbReference type="PDB" id="5E1N">
    <property type="method" value="X-ray"/>
    <property type="resolution" value="1.00 A"/>
    <property type="chains" value="A=2-149"/>
</dbReference>
<dbReference type="PDB" id="5E1P">
    <property type="method" value="X-ray"/>
    <property type="resolution" value="1.01 A"/>
    <property type="chains" value="A=2-149"/>
</dbReference>
<dbReference type="PDBsum" id="1CLM"/>
<dbReference type="PDBsum" id="1EXR"/>
<dbReference type="PDBsum" id="1N0Y"/>
<dbReference type="PDBsum" id="1OSA"/>
<dbReference type="PDBsum" id="2KXW"/>
<dbReference type="PDBsum" id="2M5E"/>
<dbReference type="PDBsum" id="5E1K"/>
<dbReference type="PDBsum" id="5E1N"/>
<dbReference type="PDBsum" id="5E1P"/>
<dbReference type="BMRB" id="P07463"/>
<dbReference type="SMR" id="P07463"/>
<dbReference type="DIP" id="DIP-59128N"/>
<dbReference type="ELM" id="P07463"/>
<dbReference type="IntAct" id="P07463">
    <property type="interactions" value="1"/>
</dbReference>
<dbReference type="STRING" id="5888.P07463"/>
<dbReference type="iPTMnet" id="P07463"/>
<dbReference type="EnsemblProtists" id="CAK80966">
    <property type="protein sequence ID" value="CAK80966"/>
    <property type="gene ID" value="GSPATT00015825001"/>
</dbReference>
<dbReference type="GeneID" id="5034148"/>
<dbReference type="KEGG" id="ptm:GSPATT00015825001"/>
<dbReference type="eggNOG" id="KOG0027">
    <property type="taxonomic scope" value="Eukaryota"/>
</dbReference>
<dbReference type="HOGENOM" id="CLU_061288_2_0_1"/>
<dbReference type="InParanoid" id="P07463"/>
<dbReference type="OMA" id="ARKMKEC"/>
<dbReference type="OrthoDB" id="26525at2759"/>
<dbReference type="EvolutionaryTrace" id="P07463"/>
<dbReference type="Proteomes" id="UP000000600">
    <property type="component" value="Partially assembled WGS sequence"/>
</dbReference>
<dbReference type="GO" id="GO:0005737">
    <property type="term" value="C:cytoplasm"/>
    <property type="evidence" value="ECO:0000318"/>
    <property type="project" value="GO_Central"/>
</dbReference>
<dbReference type="GO" id="GO:0005509">
    <property type="term" value="F:calcium ion binding"/>
    <property type="evidence" value="ECO:0000318"/>
    <property type="project" value="GO_Central"/>
</dbReference>
<dbReference type="GO" id="GO:0030234">
    <property type="term" value="F:enzyme regulator activity"/>
    <property type="evidence" value="ECO:0000318"/>
    <property type="project" value="GO_Central"/>
</dbReference>
<dbReference type="CDD" id="cd00051">
    <property type="entry name" value="EFh"/>
    <property type="match status" value="2"/>
</dbReference>
<dbReference type="FunFam" id="1.10.238.10:FF:000003">
    <property type="entry name" value="Calmodulin A"/>
    <property type="match status" value="1"/>
</dbReference>
<dbReference type="Gene3D" id="1.10.238.10">
    <property type="entry name" value="EF-hand"/>
    <property type="match status" value="3"/>
</dbReference>
<dbReference type="InterPro" id="IPR050230">
    <property type="entry name" value="CALM/Myosin/TropC-like"/>
</dbReference>
<dbReference type="InterPro" id="IPR011992">
    <property type="entry name" value="EF-hand-dom_pair"/>
</dbReference>
<dbReference type="InterPro" id="IPR018247">
    <property type="entry name" value="EF_Hand_1_Ca_BS"/>
</dbReference>
<dbReference type="InterPro" id="IPR002048">
    <property type="entry name" value="EF_hand_dom"/>
</dbReference>
<dbReference type="PANTHER" id="PTHR23048:SF0">
    <property type="entry name" value="CALMODULIN LIKE 3"/>
    <property type="match status" value="1"/>
</dbReference>
<dbReference type="PANTHER" id="PTHR23048">
    <property type="entry name" value="MYOSIN LIGHT CHAIN 1, 3"/>
    <property type="match status" value="1"/>
</dbReference>
<dbReference type="Pfam" id="PF13499">
    <property type="entry name" value="EF-hand_7"/>
    <property type="match status" value="2"/>
</dbReference>
<dbReference type="SMART" id="SM00054">
    <property type="entry name" value="EFh"/>
    <property type="match status" value="4"/>
</dbReference>
<dbReference type="SUPFAM" id="SSF47473">
    <property type="entry name" value="EF-hand"/>
    <property type="match status" value="1"/>
</dbReference>
<dbReference type="PROSITE" id="PS00018">
    <property type="entry name" value="EF_HAND_1"/>
    <property type="match status" value="4"/>
</dbReference>
<dbReference type="PROSITE" id="PS50222">
    <property type="entry name" value="EF_HAND_2"/>
    <property type="match status" value="4"/>
</dbReference>
<gene>
    <name type="primary">CAM</name>
    <name type="ORF">GSPATT00015825001</name>
</gene>
<reference key="1">
    <citation type="journal article" date="1990" name="Cell">
        <title>Mutations in paramecium calmodulin indicate functional differences between the C-terminal and N-terminal lobes in vivo.</title>
        <authorList>
            <person name="Kink J.A."/>
            <person name="Maley M.E."/>
            <person name="Preston R.R."/>
            <person name="Ling K.Y."/>
            <person name="Wallen-Friedman M.A."/>
            <person name="Saimi Y."/>
            <person name="Kung C."/>
        </authorList>
    </citation>
    <scope>NUCLEOTIDE SEQUENCE [GENOMIC DNA]</scope>
</reference>
<reference key="2">
    <citation type="journal article" date="2006" name="Nature">
        <title>Global trends of whole-genome duplications revealed by the ciliate Paramecium tetraurelia.</title>
        <authorList>
            <person name="Aury J.-M."/>
            <person name="Jaillon O."/>
            <person name="Duret L."/>
            <person name="Noel B."/>
            <person name="Jubin C."/>
            <person name="Porcel B.M."/>
            <person name="Segurens B."/>
            <person name="Daubin V."/>
            <person name="Anthouard V."/>
            <person name="Aiach N."/>
            <person name="Arnaiz O."/>
            <person name="Billaut A."/>
            <person name="Beisson J."/>
            <person name="Blanc I."/>
            <person name="Bouhouche K."/>
            <person name="Camara F."/>
            <person name="Duharcourt S."/>
            <person name="Guigo R."/>
            <person name="Gogendeau D."/>
            <person name="Katinka M."/>
            <person name="Keller A.-M."/>
            <person name="Kissmehl R."/>
            <person name="Klotz C."/>
            <person name="Koll F."/>
            <person name="Le Mouel A."/>
            <person name="Lepere G."/>
            <person name="Malinsky S."/>
            <person name="Nowacki M."/>
            <person name="Nowak J.K."/>
            <person name="Plattner H."/>
            <person name="Poulain J."/>
            <person name="Ruiz F."/>
            <person name="Serrano V."/>
            <person name="Zagulski M."/>
            <person name="Dessen P."/>
            <person name="Betermier M."/>
            <person name="Weissenbach J."/>
            <person name="Scarpelli C."/>
            <person name="Schaechter V."/>
            <person name="Sperling L."/>
            <person name="Meyer E."/>
            <person name="Cohen J."/>
            <person name="Wincker P."/>
        </authorList>
    </citation>
    <scope>NUCLEOTIDE SEQUENCE [LARGE SCALE GENOMIC DNA]</scope>
    <source>
        <strain>Stock d4-2</strain>
    </source>
</reference>
<reference key="3">
    <citation type="journal article" date="1987" name="J. Biol. Chem.">
        <title>Amino acid sequence of a novel calmodulin from Paramecium tetraurelia that contains dimethyllysine in the first domain.</title>
        <authorList>
            <person name="Schaefer W.H."/>
            <person name="Lukas T.J."/>
            <person name="Blair I.A."/>
            <person name="Schultz J.E."/>
            <person name="Watterson D.M."/>
        </authorList>
    </citation>
    <scope>PROTEIN SEQUENCE OF 2-149</scope>
    <scope>ACETYLATION AT ALA-2</scope>
    <scope>METHYLATION AT LYS-14 AND LYS-116</scope>
</reference>
<reference key="4">
    <citation type="journal article" date="1987" name="Proc. Natl. Acad. Sci. U.S.A.">
        <title>A mutant Paramecium with a defective calcium-dependent potassium conductance has an altered calmodulin: a nonlethal selective alteration in calmodulin regulation.</title>
        <authorList>
            <person name="Schaefer W.H."/>
            <person name="Hinrichsen R.D."/>
            <person name="Burgess-Cassler A."/>
            <person name="Kung C."/>
            <person name="Blair I.A."/>
            <person name="Watterson D.M."/>
        </authorList>
    </citation>
    <scope>MUTAGENESIS OF SER-102</scope>
</reference>
<reference key="5">
    <citation type="journal article" date="1989" name="Proc. Natl. Acad. Sci. U.S.A.">
        <title>In vivo mutations of calmodulin: a mutant Paramecium with altered ion current regulation has an isoleucine-to-threonine change at residue 136 and an altered methylation state at lysine residue 115.</title>
        <authorList>
            <person name="Lukas T.J."/>
            <person name="Wallen-Friedman M."/>
            <person name="Kung C."/>
            <person name="Watterson D.M."/>
        </authorList>
    </citation>
    <scope>MUTAGENESIS OF ILE-137</scope>
</reference>
<reference key="6">
    <citation type="journal article" date="1992" name="Proteins">
        <title>Primary mutations in calmodulin prevent activation of the Ca(2+)-dependent Na+ channel in Paramecium.</title>
        <authorList>
            <person name="Ling K.-Y."/>
            <person name="Preston R.R."/>
            <person name="Burns R."/>
            <person name="Kink J.A."/>
            <person name="Saimi Y."/>
            <person name="Kung C."/>
        </authorList>
    </citation>
    <scope>MUTAGENESIS OF ASP-51</scope>
</reference>
<reference key="7">
    <citation type="journal article" date="1994" name="Eur. J. Biochem.">
        <title>New non-lethal calmodulin mutations in Paramecium. A structural and functional bipartition hypothesis.</title>
        <authorList>
            <person name="Ling K.-Y."/>
            <person name="Maley M.E."/>
            <person name="Preston R.R."/>
            <person name="Saimi Y."/>
            <person name="Kung C."/>
        </authorList>
    </citation>
    <scope>MUTAGENESIS OF VAL-36; GLY-41; ASP-51; GLU-55; GLY-60; ASP-96; ALA-103; GLU-105; HIS-136 AND MET-146</scope>
</reference>
<reference key="8">
    <citation type="journal article" date="1993" name="Protein Sci.">
        <title>Structure of Paramecium tetraurelia calmodulin at 1.8-A resolution.</title>
        <authorList>
            <person name="Rao S.T."/>
            <person name="Wu S."/>
            <person name="Satyshur K.A."/>
            <person name="Ling K.-Y."/>
            <person name="Kung C."/>
            <person name="Sundaralingam M."/>
        </authorList>
    </citation>
    <scope>X-RAY CRYSTALLOGRAPHY (2.5 ANGSTROMS)</scope>
</reference>
<reference key="9">
    <citation type="journal article" date="1994" name="Acta Crystallogr. D">
        <title>Structure of the recombinant Paramecium tetraurelia calmodulin at 1.68-A resolution.</title>
        <authorList>
            <person name="Ban C."/>
            <person name="Ramakrishnan B."/>
            <person name="Ling K.-Y."/>
            <person name="Kung C."/>
            <person name="Sundaralingam M."/>
        </authorList>
    </citation>
    <scope>X-RAY CRYSTALLOGRAPHY (1.68 ANGSTROMS)</scope>
</reference>
<keyword id="KW-0002">3D-structure</keyword>
<keyword id="KW-0007">Acetylation</keyword>
<keyword id="KW-0106">Calcium</keyword>
<keyword id="KW-0903">Direct protein sequencing</keyword>
<keyword id="KW-0479">Metal-binding</keyword>
<keyword id="KW-0488">Methylation</keyword>
<keyword id="KW-1185">Reference proteome</keyword>
<keyword id="KW-0677">Repeat</keyword>
<comment type="function">
    <text>Calmodulin mediates the control of a large number of enzymes, ion channels and other proteins by Ca(2+). Among the enzymes to be stimulated by the calmodulin-Ca(2+) complex are a number of protein kinases and phosphatases.</text>
</comment>
<comment type="interaction">
    <interactant intactId="EBI-15916571">
        <id>P07463</id>
    </interactant>
    <interactant intactId="EBI-2619448">
        <id>P04775</id>
        <label>Scn2a</label>
    </interactant>
    <organismsDiffer>true</organismsDiffer>
    <experiments>2</experiments>
</comment>
<comment type="PTM">
    <text>The pantophobiac mutant CAM2 is undermethylated on Lys-116.</text>
</comment>
<comment type="miscellaneous">
    <text>This protein has four functional calcium-binding sites.</text>
</comment>
<comment type="similarity">
    <text evidence="7">Belongs to the calmodulin family.</text>
</comment>